<organism>
    <name type="scientific">Borrelia recurrentis (strain A1)</name>
    <dbReference type="NCBI Taxonomy" id="412418"/>
    <lineage>
        <taxon>Bacteria</taxon>
        <taxon>Pseudomonadati</taxon>
        <taxon>Spirochaetota</taxon>
        <taxon>Spirochaetia</taxon>
        <taxon>Spirochaetales</taxon>
        <taxon>Borreliaceae</taxon>
        <taxon>Borrelia</taxon>
    </lineage>
</organism>
<name>ACKA_BORRA</name>
<keyword id="KW-0067">ATP-binding</keyword>
<keyword id="KW-0963">Cytoplasm</keyword>
<keyword id="KW-0418">Kinase</keyword>
<keyword id="KW-0460">Magnesium</keyword>
<keyword id="KW-0479">Metal-binding</keyword>
<keyword id="KW-0547">Nucleotide-binding</keyword>
<keyword id="KW-0808">Transferase</keyword>
<dbReference type="EC" id="2.7.2.1" evidence="1"/>
<dbReference type="EMBL" id="CP000993">
    <property type="protein sequence ID" value="ACH94851.1"/>
    <property type="molecule type" value="Genomic_DNA"/>
</dbReference>
<dbReference type="SMR" id="B5RPW7"/>
<dbReference type="KEGG" id="bre:BRE_629"/>
<dbReference type="HOGENOM" id="CLU_020352_0_1_12"/>
<dbReference type="UniPathway" id="UPA00340">
    <property type="reaction ID" value="UER00458"/>
</dbReference>
<dbReference type="Proteomes" id="UP000000612">
    <property type="component" value="Chromosome"/>
</dbReference>
<dbReference type="GO" id="GO:0005737">
    <property type="term" value="C:cytoplasm"/>
    <property type="evidence" value="ECO:0007669"/>
    <property type="project" value="UniProtKB-SubCell"/>
</dbReference>
<dbReference type="GO" id="GO:0008776">
    <property type="term" value="F:acetate kinase activity"/>
    <property type="evidence" value="ECO:0007669"/>
    <property type="project" value="UniProtKB-UniRule"/>
</dbReference>
<dbReference type="GO" id="GO:0005524">
    <property type="term" value="F:ATP binding"/>
    <property type="evidence" value="ECO:0007669"/>
    <property type="project" value="UniProtKB-KW"/>
</dbReference>
<dbReference type="GO" id="GO:0000287">
    <property type="term" value="F:magnesium ion binding"/>
    <property type="evidence" value="ECO:0007669"/>
    <property type="project" value="UniProtKB-UniRule"/>
</dbReference>
<dbReference type="GO" id="GO:0006083">
    <property type="term" value="P:acetate metabolic process"/>
    <property type="evidence" value="ECO:0007669"/>
    <property type="project" value="TreeGrafter"/>
</dbReference>
<dbReference type="GO" id="GO:0006085">
    <property type="term" value="P:acetyl-CoA biosynthetic process"/>
    <property type="evidence" value="ECO:0007669"/>
    <property type="project" value="UniProtKB-UniRule"/>
</dbReference>
<dbReference type="CDD" id="cd24010">
    <property type="entry name" value="ASKHA_NBD_AcK_PK"/>
    <property type="match status" value="1"/>
</dbReference>
<dbReference type="Gene3D" id="3.30.420.40">
    <property type="match status" value="2"/>
</dbReference>
<dbReference type="HAMAP" id="MF_00020">
    <property type="entry name" value="Acetate_kinase"/>
    <property type="match status" value="1"/>
</dbReference>
<dbReference type="InterPro" id="IPR004372">
    <property type="entry name" value="Ac/propionate_kinase"/>
</dbReference>
<dbReference type="InterPro" id="IPR000890">
    <property type="entry name" value="Aliphatic_acid_kin_short-chain"/>
</dbReference>
<dbReference type="InterPro" id="IPR023865">
    <property type="entry name" value="Aliphatic_acid_kinase_CS"/>
</dbReference>
<dbReference type="InterPro" id="IPR043129">
    <property type="entry name" value="ATPase_NBD"/>
</dbReference>
<dbReference type="NCBIfam" id="TIGR00016">
    <property type="entry name" value="ackA"/>
    <property type="match status" value="1"/>
</dbReference>
<dbReference type="PANTHER" id="PTHR21060">
    <property type="entry name" value="ACETATE KINASE"/>
    <property type="match status" value="1"/>
</dbReference>
<dbReference type="PANTHER" id="PTHR21060:SF15">
    <property type="entry name" value="ACETATE KINASE-RELATED"/>
    <property type="match status" value="1"/>
</dbReference>
<dbReference type="Pfam" id="PF00871">
    <property type="entry name" value="Acetate_kinase"/>
    <property type="match status" value="1"/>
</dbReference>
<dbReference type="PIRSF" id="PIRSF000722">
    <property type="entry name" value="Acetate_prop_kin"/>
    <property type="match status" value="1"/>
</dbReference>
<dbReference type="PRINTS" id="PR00471">
    <property type="entry name" value="ACETATEKNASE"/>
</dbReference>
<dbReference type="SUPFAM" id="SSF53067">
    <property type="entry name" value="Actin-like ATPase domain"/>
    <property type="match status" value="2"/>
</dbReference>
<dbReference type="PROSITE" id="PS01075">
    <property type="entry name" value="ACETATE_KINASE_1"/>
    <property type="match status" value="1"/>
</dbReference>
<dbReference type="PROSITE" id="PS01076">
    <property type="entry name" value="ACETATE_KINASE_2"/>
    <property type="match status" value="1"/>
</dbReference>
<comment type="function">
    <text evidence="1">Catalyzes the formation of acetyl phosphate from acetate and ATP. Can also catalyze the reverse reaction.</text>
</comment>
<comment type="catalytic activity">
    <reaction evidence="1">
        <text>acetate + ATP = acetyl phosphate + ADP</text>
        <dbReference type="Rhea" id="RHEA:11352"/>
        <dbReference type="ChEBI" id="CHEBI:22191"/>
        <dbReference type="ChEBI" id="CHEBI:30089"/>
        <dbReference type="ChEBI" id="CHEBI:30616"/>
        <dbReference type="ChEBI" id="CHEBI:456216"/>
        <dbReference type="EC" id="2.7.2.1"/>
    </reaction>
</comment>
<comment type="cofactor">
    <cofactor evidence="1">
        <name>Mg(2+)</name>
        <dbReference type="ChEBI" id="CHEBI:18420"/>
    </cofactor>
    <cofactor evidence="1">
        <name>Mn(2+)</name>
        <dbReference type="ChEBI" id="CHEBI:29035"/>
    </cofactor>
    <text evidence="1">Mg(2+). Can also accept Mn(2+).</text>
</comment>
<comment type="pathway">
    <text evidence="1">Metabolic intermediate biosynthesis; acetyl-CoA biosynthesis; acetyl-CoA from acetate: step 1/2.</text>
</comment>
<comment type="subunit">
    <text evidence="1">Homodimer.</text>
</comment>
<comment type="subcellular location">
    <subcellularLocation>
        <location evidence="1">Cytoplasm</location>
    </subcellularLocation>
</comment>
<comment type="similarity">
    <text evidence="1">Belongs to the acetokinase family.</text>
</comment>
<reference key="1">
    <citation type="journal article" date="2008" name="PLoS Genet.">
        <title>The genome of Borrelia recurrentis, the agent of deadly louse-borne relapsing fever, is a degraded subset of tick-borne Borrelia duttonii.</title>
        <authorList>
            <person name="Lescot M."/>
            <person name="Audic S."/>
            <person name="Robert C."/>
            <person name="Nguyen T.T."/>
            <person name="Blanc G."/>
            <person name="Cutler S.J."/>
            <person name="Wincker P."/>
            <person name="Couloux A."/>
            <person name="Claverie J.-M."/>
            <person name="Raoult D."/>
            <person name="Drancourt M."/>
        </authorList>
    </citation>
    <scope>NUCLEOTIDE SEQUENCE [LARGE SCALE GENOMIC DNA]</scope>
    <source>
        <strain>A1</strain>
    </source>
</reference>
<evidence type="ECO:0000255" key="1">
    <source>
        <dbReference type="HAMAP-Rule" id="MF_00020"/>
    </source>
</evidence>
<feature type="chain" id="PRO_1000089962" description="Acetate kinase">
    <location>
        <begin position="1"/>
        <end position="408"/>
    </location>
</feature>
<feature type="active site" description="Proton donor/acceptor" evidence="1">
    <location>
        <position position="153"/>
    </location>
</feature>
<feature type="binding site" evidence="1">
    <location>
        <position position="10"/>
    </location>
    <ligand>
        <name>Mg(2+)</name>
        <dbReference type="ChEBI" id="CHEBI:18420"/>
    </ligand>
</feature>
<feature type="binding site" evidence="1">
    <location>
        <position position="17"/>
    </location>
    <ligand>
        <name>ATP</name>
        <dbReference type="ChEBI" id="CHEBI:30616"/>
    </ligand>
</feature>
<feature type="binding site" evidence="1">
    <location>
        <position position="96"/>
    </location>
    <ligand>
        <name>substrate</name>
    </ligand>
</feature>
<feature type="binding site" evidence="1">
    <location>
        <begin position="213"/>
        <end position="217"/>
    </location>
    <ligand>
        <name>ATP</name>
        <dbReference type="ChEBI" id="CHEBI:30616"/>
    </ligand>
</feature>
<feature type="binding site" evidence="1">
    <location>
        <begin position="288"/>
        <end position="290"/>
    </location>
    <ligand>
        <name>ATP</name>
        <dbReference type="ChEBI" id="CHEBI:30616"/>
    </ligand>
</feature>
<feature type="binding site" evidence="1">
    <location>
        <position position="393"/>
    </location>
    <ligand>
        <name>Mg(2+)</name>
        <dbReference type="ChEBI" id="CHEBI:18420"/>
    </ligand>
</feature>
<feature type="site" description="Transition state stabilizer" evidence="1">
    <location>
        <position position="185"/>
    </location>
</feature>
<feature type="site" description="Transition state stabilizer" evidence="1">
    <location>
        <position position="246"/>
    </location>
</feature>
<proteinExistence type="inferred from homology"/>
<protein>
    <recommendedName>
        <fullName evidence="1">Acetate kinase</fullName>
        <ecNumber evidence="1">2.7.2.1</ecNumber>
    </recommendedName>
    <alternativeName>
        <fullName evidence="1">Acetokinase</fullName>
    </alternativeName>
</protein>
<accession>B5RPW7</accession>
<gene>
    <name evidence="1" type="primary">ackA</name>
    <name type="ordered locus">BRE_629</name>
</gene>
<sequence length="408" mass="46394">MKNIIILIINTGSSSLKFTLYEYQYQSEQILASGIIEKIKTTQAIIKIKFKNKLLELTNLNIKSHKKALKHLIKTLTNKKTKIINYLDQIQGIGHRIVHGGAQFKNSVIINQNVLNELKKISHLAPLHNPIAIKVIEQMFILFPNAKQVACFDTSWHQTMNQKAFLYATPYSWYKDYHIRKYGFHGLSYAYITKRTAIILNKNIEDLNLIILHLGNGASINAVQKGRSYDTSMGLTPLEGLVMGTRSGDIDPTIIPLMSKILKKTTKQIENILNKESGMLGISCKSNDLRDIWIESNNNEYNSKLAVEIMTYRIKKYIGSYLAALDFNIDAIIFTAGIGTSDYEIRKLSLQGFEKIGIKIDFQKNNLAIDKNTEYDISSNQSNIKILVIPTNEELTILEDTYDLIKNN</sequence>